<dbReference type="EC" id="6.3.1.1" evidence="1"/>
<dbReference type="EMBL" id="CP001657">
    <property type="protein sequence ID" value="ACT15259.1"/>
    <property type="molecule type" value="Genomic_DNA"/>
</dbReference>
<dbReference type="RefSeq" id="WP_015842324.1">
    <property type="nucleotide sequence ID" value="NC_012917.1"/>
</dbReference>
<dbReference type="SMR" id="C6DJG0"/>
<dbReference type="STRING" id="561230.PC1_4245"/>
<dbReference type="GeneID" id="67796233"/>
<dbReference type="KEGG" id="pct:PC1_4245"/>
<dbReference type="eggNOG" id="COG2502">
    <property type="taxonomic scope" value="Bacteria"/>
</dbReference>
<dbReference type="HOGENOM" id="CLU_071543_0_0_6"/>
<dbReference type="OrthoDB" id="3185462at2"/>
<dbReference type="UniPathway" id="UPA00134">
    <property type="reaction ID" value="UER00194"/>
</dbReference>
<dbReference type="Proteomes" id="UP000002736">
    <property type="component" value="Chromosome"/>
</dbReference>
<dbReference type="GO" id="GO:0005829">
    <property type="term" value="C:cytosol"/>
    <property type="evidence" value="ECO:0007669"/>
    <property type="project" value="TreeGrafter"/>
</dbReference>
<dbReference type="GO" id="GO:0004071">
    <property type="term" value="F:aspartate-ammonia ligase activity"/>
    <property type="evidence" value="ECO:0007669"/>
    <property type="project" value="UniProtKB-UniRule"/>
</dbReference>
<dbReference type="GO" id="GO:0005524">
    <property type="term" value="F:ATP binding"/>
    <property type="evidence" value="ECO:0007669"/>
    <property type="project" value="UniProtKB-UniRule"/>
</dbReference>
<dbReference type="GO" id="GO:0070981">
    <property type="term" value="P:L-asparagine biosynthetic process"/>
    <property type="evidence" value="ECO:0007669"/>
    <property type="project" value="UniProtKB-UniRule"/>
</dbReference>
<dbReference type="Gene3D" id="3.30.930.10">
    <property type="entry name" value="Bira Bifunctional Protein, Domain 2"/>
    <property type="match status" value="1"/>
</dbReference>
<dbReference type="HAMAP" id="MF_00555">
    <property type="entry name" value="AsnA"/>
    <property type="match status" value="1"/>
</dbReference>
<dbReference type="InterPro" id="IPR006195">
    <property type="entry name" value="aa-tRNA-synth_II"/>
</dbReference>
<dbReference type="InterPro" id="IPR045864">
    <property type="entry name" value="aa-tRNA-synth_II/BPL/LPL"/>
</dbReference>
<dbReference type="InterPro" id="IPR004618">
    <property type="entry name" value="AsnA"/>
</dbReference>
<dbReference type="NCBIfam" id="TIGR00669">
    <property type="entry name" value="asnA"/>
    <property type="match status" value="1"/>
</dbReference>
<dbReference type="PANTHER" id="PTHR30073">
    <property type="entry name" value="ASPARTATE--AMMONIA LIGASE"/>
    <property type="match status" value="1"/>
</dbReference>
<dbReference type="PANTHER" id="PTHR30073:SF5">
    <property type="entry name" value="ASPARTATE--AMMONIA LIGASE"/>
    <property type="match status" value="1"/>
</dbReference>
<dbReference type="Pfam" id="PF03590">
    <property type="entry name" value="AsnA"/>
    <property type="match status" value="1"/>
</dbReference>
<dbReference type="PIRSF" id="PIRSF001555">
    <property type="entry name" value="Asp_ammon_ligase"/>
    <property type="match status" value="1"/>
</dbReference>
<dbReference type="SUPFAM" id="SSF55681">
    <property type="entry name" value="Class II aaRS and biotin synthetases"/>
    <property type="match status" value="1"/>
</dbReference>
<dbReference type="PROSITE" id="PS50862">
    <property type="entry name" value="AA_TRNA_LIGASE_II"/>
    <property type="match status" value="1"/>
</dbReference>
<feature type="chain" id="PRO_1000212014" description="Aspartate--ammonia ligase">
    <location>
        <begin position="1"/>
        <end position="330"/>
    </location>
</feature>
<organism>
    <name type="scientific">Pectobacterium carotovorum subsp. carotovorum (strain PC1)</name>
    <dbReference type="NCBI Taxonomy" id="561230"/>
    <lineage>
        <taxon>Bacteria</taxon>
        <taxon>Pseudomonadati</taxon>
        <taxon>Pseudomonadota</taxon>
        <taxon>Gammaproteobacteria</taxon>
        <taxon>Enterobacterales</taxon>
        <taxon>Pectobacteriaceae</taxon>
        <taxon>Pectobacterium</taxon>
    </lineage>
</organism>
<gene>
    <name evidence="1" type="primary">asnA</name>
    <name type="ordered locus">PC1_4245</name>
</gene>
<proteinExistence type="inferred from homology"/>
<accession>C6DJG0</accession>
<sequence length="330" mass="36909">MKKQYIEKQQQISFVKSFFSSQLEQLLGLIEVQAPILSRIGDGTQDNLSGTEKAVQVKVKALPDATFEVVHSLAKWKRKTLGAYDFSSGEGIYTHMKALRPDEDRLSPIHSVYVDQWDWERVMGDGERHAEYLKSTVTRIYQGIKATEAAVHQAFGIQPFLPEQIHFVHTETLLKRYPELDAKGRERAIAKELGAVFLIGIGGKLSSGQSHDVRAPDYDDWTTPGEQELAGLNGDIVVWNPVLNDAFEISSMGIRVDAEALTRQLALTQDEERLKLEWHQALLRGEMPQTIGGGIGQSRLVMLLLQLSHIGQVQCGVWPQPLRESVSGLL</sequence>
<keyword id="KW-0028">Amino-acid biosynthesis</keyword>
<keyword id="KW-0061">Asparagine biosynthesis</keyword>
<keyword id="KW-0067">ATP-binding</keyword>
<keyword id="KW-0963">Cytoplasm</keyword>
<keyword id="KW-0436">Ligase</keyword>
<keyword id="KW-0547">Nucleotide-binding</keyword>
<comment type="catalytic activity">
    <reaction evidence="1">
        <text>L-aspartate + NH4(+) + ATP = L-asparagine + AMP + diphosphate + H(+)</text>
        <dbReference type="Rhea" id="RHEA:11372"/>
        <dbReference type="ChEBI" id="CHEBI:15378"/>
        <dbReference type="ChEBI" id="CHEBI:28938"/>
        <dbReference type="ChEBI" id="CHEBI:29991"/>
        <dbReference type="ChEBI" id="CHEBI:30616"/>
        <dbReference type="ChEBI" id="CHEBI:33019"/>
        <dbReference type="ChEBI" id="CHEBI:58048"/>
        <dbReference type="ChEBI" id="CHEBI:456215"/>
        <dbReference type="EC" id="6.3.1.1"/>
    </reaction>
</comment>
<comment type="pathway">
    <text evidence="1">Amino-acid biosynthesis; L-asparagine biosynthesis; L-asparagine from L-aspartate (ammonia route): step 1/1.</text>
</comment>
<comment type="subcellular location">
    <subcellularLocation>
        <location evidence="1">Cytoplasm</location>
    </subcellularLocation>
</comment>
<comment type="similarity">
    <text evidence="1">Belongs to the class-II aminoacyl-tRNA synthetase family. AsnA subfamily.</text>
</comment>
<name>ASNA_PECCP</name>
<protein>
    <recommendedName>
        <fullName evidence="1">Aspartate--ammonia ligase</fullName>
        <ecNumber evidence="1">6.3.1.1</ecNumber>
    </recommendedName>
    <alternativeName>
        <fullName evidence="1">Asparagine synthetase A</fullName>
    </alternativeName>
</protein>
<evidence type="ECO:0000255" key="1">
    <source>
        <dbReference type="HAMAP-Rule" id="MF_00555"/>
    </source>
</evidence>
<reference key="1">
    <citation type="submission" date="2009-07" db="EMBL/GenBank/DDBJ databases">
        <title>Complete sequence of Pectobacterium carotovorum subsp. carotovorum PC1.</title>
        <authorList>
            <consortium name="US DOE Joint Genome Institute"/>
            <person name="Lucas S."/>
            <person name="Copeland A."/>
            <person name="Lapidus A."/>
            <person name="Glavina del Rio T."/>
            <person name="Tice H."/>
            <person name="Bruce D."/>
            <person name="Goodwin L."/>
            <person name="Pitluck S."/>
            <person name="Munk A.C."/>
            <person name="Brettin T."/>
            <person name="Detter J.C."/>
            <person name="Han C."/>
            <person name="Tapia R."/>
            <person name="Larimer F."/>
            <person name="Land M."/>
            <person name="Hauser L."/>
            <person name="Kyrpides N."/>
            <person name="Mikhailova N."/>
            <person name="Balakrishnan V."/>
            <person name="Glasner J."/>
            <person name="Perna N.T."/>
        </authorList>
    </citation>
    <scope>NUCLEOTIDE SEQUENCE [LARGE SCALE GENOMIC DNA]</scope>
    <source>
        <strain>PC1</strain>
    </source>
</reference>